<name>Y2716_MYCTO</name>
<protein>
    <recommendedName>
        <fullName>Uncharacterized protein MT2789</fullName>
    </recommendedName>
</protein>
<reference key="1">
    <citation type="journal article" date="2002" name="J. Bacteriol.">
        <title>Whole-genome comparison of Mycobacterium tuberculosis clinical and laboratory strains.</title>
        <authorList>
            <person name="Fleischmann R.D."/>
            <person name="Alland D."/>
            <person name="Eisen J.A."/>
            <person name="Carpenter L."/>
            <person name="White O."/>
            <person name="Peterson J.D."/>
            <person name="DeBoy R.T."/>
            <person name="Dodson R.J."/>
            <person name="Gwinn M.L."/>
            <person name="Haft D.H."/>
            <person name="Hickey E.K."/>
            <person name="Kolonay J.F."/>
            <person name="Nelson W.C."/>
            <person name="Umayam L.A."/>
            <person name="Ermolaeva M.D."/>
            <person name="Salzberg S.L."/>
            <person name="Delcher A."/>
            <person name="Utterback T.R."/>
            <person name="Weidman J.F."/>
            <person name="Khouri H.M."/>
            <person name="Gill J."/>
            <person name="Mikula A."/>
            <person name="Bishai W."/>
            <person name="Jacobs W.R. Jr."/>
            <person name="Venter J.C."/>
            <person name="Fraser C.M."/>
        </authorList>
    </citation>
    <scope>NUCLEOTIDE SEQUENCE [LARGE SCALE GENOMIC DNA]</scope>
    <source>
        <strain>CDC 1551 / Oshkosh</strain>
    </source>
</reference>
<organism>
    <name type="scientific">Mycobacterium tuberculosis (strain CDC 1551 / Oshkosh)</name>
    <dbReference type="NCBI Taxonomy" id="83331"/>
    <lineage>
        <taxon>Bacteria</taxon>
        <taxon>Bacillati</taxon>
        <taxon>Actinomycetota</taxon>
        <taxon>Actinomycetes</taxon>
        <taxon>Mycobacteriales</taxon>
        <taxon>Mycobacteriaceae</taxon>
        <taxon>Mycobacterium</taxon>
        <taxon>Mycobacterium tuberculosis complex</taxon>
    </lineage>
</organism>
<keyword id="KW-1185">Reference proteome</keyword>
<gene>
    <name type="ordered locus">MT2789</name>
</gene>
<dbReference type="EMBL" id="AE000516">
    <property type="protein sequence ID" value="AAK47105.1"/>
    <property type="molecule type" value="Genomic_DNA"/>
</dbReference>
<dbReference type="PIR" id="G70532">
    <property type="entry name" value="G70532"/>
</dbReference>
<dbReference type="RefSeq" id="WP_003413971.1">
    <property type="nucleotide sequence ID" value="NZ_KK341227.1"/>
</dbReference>
<dbReference type="SMR" id="P9WL42"/>
<dbReference type="KEGG" id="mtc:MT2789"/>
<dbReference type="PATRIC" id="fig|83331.31.peg.3003"/>
<dbReference type="HOGENOM" id="CLU_098567_0_0_11"/>
<dbReference type="Proteomes" id="UP000001020">
    <property type="component" value="Chromosome"/>
</dbReference>
<dbReference type="GO" id="GO:0005737">
    <property type="term" value="C:cytoplasm"/>
    <property type="evidence" value="ECO:0007669"/>
    <property type="project" value="TreeGrafter"/>
</dbReference>
<dbReference type="GO" id="GO:0016853">
    <property type="term" value="F:isomerase activity"/>
    <property type="evidence" value="ECO:0007669"/>
    <property type="project" value="TreeGrafter"/>
</dbReference>
<dbReference type="GO" id="GO:0009058">
    <property type="term" value="P:biosynthetic process"/>
    <property type="evidence" value="ECO:0007669"/>
    <property type="project" value="InterPro"/>
</dbReference>
<dbReference type="Gene3D" id="3.10.310.10">
    <property type="entry name" value="Diaminopimelate Epimerase, Chain A, domain 1"/>
    <property type="match status" value="1"/>
</dbReference>
<dbReference type="InterPro" id="IPR003719">
    <property type="entry name" value="Phenazine_PhzF-like"/>
</dbReference>
<dbReference type="PANTHER" id="PTHR13774:SF32">
    <property type="entry name" value="ANTISENSE-ENHANCING SEQUENCE 1"/>
    <property type="match status" value="1"/>
</dbReference>
<dbReference type="PANTHER" id="PTHR13774">
    <property type="entry name" value="PHENAZINE BIOSYNTHESIS PROTEIN"/>
    <property type="match status" value="1"/>
</dbReference>
<dbReference type="Pfam" id="PF02567">
    <property type="entry name" value="PhzC-PhzF"/>
    <property type="match status" value="2"/>
</dbReference>
<dbReference type="PIRSF" id="PIRSF016184">
    <property type="entry name" value="PhzC_PhzF"/>
    <property type="match status" value="1"/>
</dbReference>
<dbReference type="SUPFAM" id="SSF54506">
    <property type="entry name" value="Diaminopimelate epimerase-like"/>
    <property type="match status" value="1"/>
</dbReference>
<proteinExistence type="predicted"/>
<accession>P9WL42</accession>
<accession>L0TC21</accession>
<accession>O07215</accession>
<accession>P0A5G7</accession>
<accession>P28176</accession>
<feature type="chain" id="PRO_0000427544" description="Uncharacterized protein MT2789">
    <location>
        <begin position="1"/>
        <end position="228"/>
    </location>
</feature>
<sequence>MAIEVSVLRVFTDSDGNFGNPLGVINASKVEHRDRQQLAAQSGYSETIFVDLPSPGSTTAHATIHTPRTEIPFAGHPTVGASWWLRERGTPINTLQVPAGIVQVSYHGDLTAISARSEWAPEFAIHDLDSLDALAAADPADFPDDIAHYLWTWTDRSAGSLRARMFAANLGVTEDEATGAAAIRITDYLSRDLTITQGKGSLIHTTWSPEGWVRVAGRVVSDGVAQLD</sequence>